<gene>
    <name type="primary">nifH</name>
</gene>
<keyword id="KW-0004">4Fe-4S</keyword>
<keyword id="KW-0013">ADP-ribosylation</keyword>
<keyword id="KW-0067">ATP-binding</keyword>
<keyword id="KW-0408">Iron</keyword>
<keyword id="KW-0411">Iron-sulfur</keyword>
<keyword id="KW-0479">Metal-binding</keyword>
<keyword id="KW-0535">Nitrogen fixation</keyword>
<keyword id="KW-0547">Nucleotide-binding</keyword>
<keyword id="KW-0560">Oxidoreductase</keyword>
<name>NIFH_AZOBR</name>
<sequence>MSLRQIAFYGKGGIGKSTTSQNTLAALVELDQKILIVGCDPKADSTRLILHAKAQDTVLHLAAEAGSVEDLELEDVLKIGYKGIKCVESGGPEPGVGCAGRGVITSINFLEENGAYDDVDYVSYDVLGDVVCGGFAMPIRENKAQEIYIVMSGEMMALYAANNIAKGILKYAHSGGVRLGGLICNERQTDKEIDLASALAARLGTQLIHFVPRDNIVQHAELRRMTVIEYAPDSQQAQEYRQLANKVHANKGKGTIPTPITMEELEEMLMDFGIMKSEEQQLAELQAKEAAKA</sequence>
<proteinExistence type="inferred from homology"/>
<dbReference type="EC" id="1.18.6.1"/>
<dbReference type="EMBL" id="X51500">
    <property type="protein sequence ID" value="CAA35868.1"/>
    <property type="molecule type" value="Genomic_DNA"/>
</dbReference>
<dbReference type="EMBL" id="M64344">
    <property type="protein sequence ID" value="AAB02342.1"/>
    <property type="status" value="ALT_SEQ"/>
    <property type="molecule type" value="Genomic_DNA"/>
</dbReference>
<dbReference type="PIR" id="S15747">
    <property type="entry name" value="S15747"/>
</dbReference>
<dbReference type="RefSeq" id="WP_014239786.1">
    <property type="nucleotide sequence ID" value="NZ_WFKD01000124.1"/>
</dbReference>
<dbReference type="SMR" id="P17303"/>
<dbReference type="GeneID" id="56451760"/>
<dbReference type="GO" id="GO:0051539">
    <property type="term" value="F:4 iron, 4 sulfur cluster binding"/>
    <property type="evidence" value="ECO:0007669"/>
    <property type="project" value="UniProtKB-KW"/>
</dbReference>
<dbReference type="GO" id="GO:0005524">
    <property type="term" value="F:ATP binding"/>
    <property type="evidence" value="ECO:0007669"/>
    <property type="project" value="UniProtKB-UniRule"/>
</dbReference>
<dbReference type="GO" id="GO:0046872">
    <property type="term" value="F:metal ion binding"/>
    <property type="evidence" value="ECO:0007669"/>
    <property type="project" value="UniProtKB-KW"/>
</dbReference>
<dbReference type="GO" id="GO:0016163">
    <property type="term" value="F:nitrogenase activity"/>
    <property type="evidence" value="ECO:0007669"/>
    <property type="project" value="UniProtKB-UniRule"/>
</dbReference>
<dbReference type="GO" id="GO:0009399">
    <property type="term" value="P:nitrogen fixation"/>
    <property type="evidence" value="ECO:0007669"/>
    <property type="project" value="UniProtKB-UniRule"/>
</dbReference>
<dbReference type="CDD" id="cd02040">
    <property type="entry name" value="NifH"/>
    <property type="match status" value="1"/>
</dbReference>
<dbReference type="FunFam" id="3.40.50.300:FF:001379">
    <property type="entry name" value="Nitrogenase iron protein 1"/>
    <property type="match status" value="1"/>
</dbReference>
<dbReference type="Gene3D" id="3.40.50.300">
    <property type="entry name" value="P-loop containing nucleotide triphosphate hydrolases"/>
    <property type="match status" value="1"/>
</dbReference>
<dbReference type="HAMAP" id="MF_00533">
    <property type="entry name" value="NifH"/>
    <property type="match status" value="1"/>
</dbReference>
<dbReference type="InterPro" id="IPR030655">
    <property type="entry name" value="NifH/chlL_CS"/>
</dbReference>
<dbReference type="InterPro" id="IPR000392">
    <property type="entry name" value="NifH/frxC"/>
</dbReference>
<dbReference type="InterPro" id="IPR005977">
    <property type="entry name" value="Nitrogenase_Fe_NifH"/>
</dbReference>
<dbReference type="InterPro" id="IPR027417">
    <property type="entry name" value="P-loop_NTPase"/>
</dbReference>
<dbReference type="NCBIfam" id="TIGR01287">
    <property type="entry name" value="nifH"/>
    <property type="match status" value="1"/>
</dbReference>
<dbReference type="PANTHER" id="PTHR42864">
    <property type="entry name" value="LIGHT-INDEPENDENT PROTOCHLOROPHYLLIDE REDUCTASE IRON-SULFUR ATP-BINDING PROTEIN"/>
    <property type="match status" value="1"/>
</dbReference>
<dbReference type="PANTHER" id="PTHR42864:SF2">
    <property type="entry name" value="LIGHT-INDEPENDENT PROTOCHLOROPHYLLIDE REDUCTASE IRON-SULFUR ATP-BINDING PROTEIN"/>
    <property type="match status" value="1"/>
</dbReference>
<dbReference type="Pfam" id="PF00142">
    <property type="entry name" value="Fer4_NifH"/>
    <property type="match status" value="1"/>
</dbReference>
<dbReference type="PIRSF" id="PIRSF000363">
    <property type="entry name" value="Nitrogenase_iron"/>
    <property type="match status" value="1"/>
</dbReference>
<dbReference type="PRINTS" id="PR00091">
    <property type="entry name" value="NITROGNASEII"/>
</dbReference>
<dbReference type="SUPFAM" id="SSF52540">
    <property type="entry name" value="P-loop containing nucleoside triphosphate hydrolases"/>
    <property type="match status" value="1"/>
</dbReference>
<dbReference type="PROSITE" id="PS00746">
    <property type="entry name" value="NIFH_FRXC_1"/>
    <property type="match status" value="1"/>
</dbReference>
<dbReference type="PROSITE" id="PS00692">
    <property type="entry name" value="NIFH_FRXC_2"/>
    <property type="match status" value="1"/>
</dbReference>
<dbReference type="PROSITE" id="PS51026">
    <property type="entry name" value="NIFH_FRXC_3"/>
    <property type="match status" value="1"/>
</dbReference>
<evidence type="ECO:0000250" key="1"/>
<evidence type="ECO:0000255" key="2"/>
<evidence type="ECO:0000305" key="3"/>
<protein>
    <recommendedName>
        <fullName>Nitrogenase iron protein</fullName>
        <ecNumber>1.18.6.1</ecNumber>
    </recommendedName>
    <alternativeName>
        <fullName>Nitrogenase Fe protein</fullName>
    </alternativeName>
    <alternativeName>
        <fullName>Nitrogenase component II</fullName>
    </alternativeName>
    <alternativeName>
        <fullName>Nitrogenase reductase</fullName>
    </alternativeName>
</protein>
<organism>
    <name type="scientific">Azospirillum brasilense</name>
    <dbReference type="NCBI Taxonomy" id="192"/>
    <lineage>
        <taxon>Bacteria</taxon>
        <taxon>Pseudomonadati</taxon>
        <taxon>Pseudomonadota</taxon>
        <taxon>Alphaproteobacteria</taxon>
        <taxon>Rhodospirillales</taxon>
        <taxon>Azospirillaceae</taxon>
        <taxon>Azospirillum</taxon>
    </lineage>
</organism>
<reference key="1">
    <citation type="journal article" date="1989" name="Mol. Gen. Genet.">
        <title>Regulation of transcription and promoter mapping of the structural genes for nitrogenase (nifHDK) of Azospirillum brasilense Sp7.</title>
        <authorList>
            <person name="de Zamaroczy M."/>
            <person name="Delorme F."/>
            <person name="Elmerich C."/>
        </authorList>
    </citation>
    <scope>NUCLEOTIDE SEQUENCE [GENOMIC DNA]</scope>
    <source>
        <strain>ATCC 29145 / DSM 1690 / IMET 11303 / Sp7</strain>
    </source>
</reference>
<reference key="2">
    <citation type="journal article" date="1989" name="Mol. Gen. Genet.">
        <title>Nucleotide sequence of the gene encoding the nitrogenase iron protein (nifH) of Azospirillum brasilense and identification of a region controlling nifH transcription.</title>
        <authorList>
            <person name="Fani R."/>
            <person name="Allotta G."/>
            <person name="Bazzicalupo M."/>
            <person name="Ricci F."/>
            <person name="Schipani C."/>
            <person name="Polsinelli M."/>
        </authorList>
    </citation>
    <scope>NUCLEOTIDE SEQUENCE [GENOMIC DNA]</scope>
</reference>
<reference key="3">
    <citation type="journal article" date="1991" name="Braz. J. Med. Biol. Res.">
        <title>The nifHDK operon in the free-living nitrogen-fixing bacteria Azospirillum brasilense sequentially comprises genes H, D, K, an 353 bp orf and gene Y.</title>
        <authorList>
            <person name="Passaglia L.M.P."/>
            <person name="Nunes C.P."/>
            <person name="Zaha A."/>
            <person name="Schrank I.S."/>
        </authorList>
    </citation>
    <scope>NUCLEOTIDE SEQUENCE [GENOMIC DNA]</scope>
</reference>
<accession>P17303</accession>
<feature type="chain" id="PRO_0000139485" description="Nitrogenase iron protein">
    <location>
        <begin position="1"/>
        <end position="293"/>
    </location>
</feature>
<feature type="binding site" evidence="2">
    <location>
        <begin position="10"/>
        <end position="17"/>
    </location>
    <ligand>
        <name>ATP</name>
        <dbReference type="ChEBI" id="CHEBI:30616"/>
    </ligand>
</feature>
<feature type="binding site" evidence="1">
    <location>
        <position position="98"/>
    </location>
    <ligand>
        <name>[4Fe-4S] cluster</name>
        <dbReference type="ChEBI" id="CHEBI:49883"/>
        <note>ligand shared between dimeric partners</note>
    </ligand>
</feature>
<feature type="binding site" evidence="1">
    <location>
        <position position="132"/>
    </location>
    <ligand>
        <name>[4Fe-4S] cluster</name>
        <dbReference type="ChEBI" id="CHEBI:49883"/>
        <note>ligand shared between dimeric partners</note>
    </ligand>
</feature>
<feature type="modified residue" description="ADP-ribosylarginine; by dinitrogenase reductase ADP-ribosyltransferase" evidence="1">
    <location>
        <position position="101"/>
    </location>
</feature>
<feature type="sequence conflict" description="In Ref. 2." evidence="3" ref="2">
    <original>A</original>
    <variation>E</variation>
    <location>
        <position position="160"/>
    </location>
</feature>
<feature type="sequence conflict" description="In Ref. 2." evidence="3" ref="2">
    <original>H</original>
    <variation>T</variation>
    <location>
        <position position="209"/>
    </location>
</feature>
<feature type="sequence conflict" description="In Ref. 2." evidence="3" ref="2">
    <original>E</original>
    <variation>Q</variation>
    <location>
        <position position="239"/>
    </location>
</feature>
<comment type="function">
    <text>The key enzymatic reactions in nitrogen fixation are catalyzed by the nitrogenase complex, which has 2 components: the iron protein and the molybdenum-iron protein.</text>
</comment>
<comment type="catalytic activity">
    <reaction>
        <text>N2 + 8 reduced [2Fe-2S]-[ferredoxin] + 16 ATP + 16 H2O = H2 + 8 oxidized [2Fe-2S]-[ferredoxin] + 2 NH4(+) + 16 ADP + 16 phosphate + 6 H(+)</text>
        <dbReference type="Rhea" id="RHEA:21448"/>
        <dbReference type="Rhea" id="RHEA-COMP:10000"/>
        <dbReference type="Rhea" id="RHEA-COMP:10001"/>
        <dbReference type="ChEBI" id="CHEBI:15377"/>
        <dbReference type="ChEBI" id="CHEBI:15378"/>
        <dbReference type="ChEBI" id="CHEBI:17997"/>
        <dbReference type="ChEBI" id="CHEBI:18276"/>
        <dbReference type="ChEBI" id="CHEBI:28938"/>
        <dbReference type="ChEBI" id="CHEBI:30616"/>
        <dbReference type="ChEBI" id="CHEBI:33737"/>
        <dbReference type="ChEBI" id="CHEBI:33738"/>
        <dbReference type="ChEBI" id="CHEBI:43474"/>
        <dbReference type="ChEBI" id="CHEBI:456216"/>
        <dbReference type="EC" id="1.18.6.1"/>
    </reaction>
</comment>
<comment type="cofactor">
    <cofactor>
        <name>[4Fe-4S] cluster</name>
        <dbReference type="ChEBI" id="CHEBI:49883"/>
    </cofactor>
    <text>Binds 1 [4Fe-4S] cluster per dimer.</text>
</comment>
<comment type="subunit">
    <text>Homodimer.</text>
</comment>
<comment type="PTM">
    <text evidence="1">The reversible ADP-ribosylation of Arg-101 inactivates the nitrogenase reductase and regulates nitrogenase activity.</text>
</comment>
<comment type="similarity">
    <text evidence="3">Belongs to the NifH/BchL/ChlL family.</text>
</comment>